<protein>
    <recommendedName>
        <fullName>GDNF family receptor alpha-4</fullName>
        <shortName>GDNF receptor alpha-4</shortName>
        <shortName>GDNFR-alpha-4</shortName>
        <shortName>GFR-alpha-4</shortName>
    </recommendedName>
    <alternativeName>
        <fullName>Persephin receptor</fullName>
    </alternativeName>
</protein>
<keyword id="KW-0025">Alternative splicing</keyword>
<keyword id="KW-1003">Cell membrane</keyword>
<keyword id="KW-0325">Glycoprotein</keyword>
<keyword id="KW-0336">GPI-anchor</keyword>
<keyword id="KW-0449">Lipoprotein</keyword>
<keyword id="KW-0472">Membrane</keyword>
<keyword id="KW-0675">Receptor</keyword>
<keyword id="KW-1185">Reference proteome</keyword>
<keyword id="KW-0964">Secreted</keyword>
<keyword id="KW-0732">Signal</keyword>
<organism>
    <name type="scientific">Rattus norvegicus</name>
    <name type="common">Rat</name>
    <dbReference type="NCBI Taxonomy" id="10116"/>
    <lineage>
        <taxon>Eukaryota</taxon>
        <taxon>Metazoa</taxon>
        <taxon>Chordata</taxon>
        <taxon>Craniata</taxon>
        <taxon>Vertebrata</taxon>
        <taxon>Euteleostomi</taxon>
        <taxon>Mammalia</taxon>
        <taxon>Eutheria</taxon>
        <taxon>Euarchontoglires</taxon>
        <taxon>Glires</taxon>
        <taxon>Rodentia</taxon>
        <taxon>Myomorpha</taxon>
        <taxon>Muroidea</taxon>
        <taxon>Muridae</taxon>
        <taxon>Murinae</taxon>
        <taxon>Rattus</taxon>
    </lineage>
</organism>
<name>GFRA4_RAT</name>
<proteinExistence type="evidence at transcript level"/>
<reference key="1">
    <citation type="journal article" date="2000" name="J. Biol. Chem.">
        <title>Mammalian GFRalpha-4, a divergent member of the GFRalpha family of coreceptors for glial cell line-derived neurotrophic factor family ligands, is a receptor for the neurotrophic factor persephin.</title>
        <authorList>
            <person name="Masure S."/>
            <person name="Cik M."/>
            <person name="Hoefnagel E."/>
            <person name="Nosrat C.A."/>
            <person name="Van der Linden I."/>
            <person name="Scott R."/>
            <person name="Van Gompel P."/>
            <person name="Lesage A.S.J."/>
            <person name="Verhasselt P."/>
            <person name="Ibanez C.F."/>
            <person name="Gordon R.D."/>
        </authorList>
    </citation>
    <scope>NUCLEOTIDE SEQUENCE [MRNA] (ISOFORMS A AND B)</scope>
    <scope>FUNCTION</scope>
    <scope>SUBCELLULAR LOCATION</scope>
    <scope>TISSUE SPECIFICITY</scope>
    <scope>VARIANT ARG-257</scope>
    <source>
        <tissue>Brain</tissue>
        <tissue>Heart</tissue>
        <tissue>Kidney</tissue>
    </source>
</reference>
<feature type="signal peptide" evidence="2">
    <location>
        <begin position="1"/>
        <end status="unknown"/>
    </location>
</feature>
<feature type="chain" id="PRO_0000010797" description="GDNF family receptor alpha-4">
    <location>
        <begin status="unknown"/>
        <end position="250"/>
    </location>
</feature>
<feature type="propeptide" id="PRO_0000010798" description="Removed in mature form" evidence="2">
    <location>
        <begin position="251"/>
        <end position="273"/>
    </location>
</feature>
<feature type="lipid moiety-binding region" description="GPI-anchor amidated asparagine" evidence="2">
    <location>
        <position position="250"/>
    </location>
</feature>
<feature type="glycosylation site" description="N-linked (GlcNAc...) asparagine" evidence="2">
    <location>
        <position position="192"/>
    </location>
</feature>
<feature type="splice variant" id="VSP_007230" description="In isoform B." evidence="4">
    <original>CCFLWVSSMSILTALALQALL</original>
    <variation>QAKVEA</variation>
    <location>
        <begin position="253"/>
        <end position="273"/>
    </location>
</feature>
<feature type="sequence variant" description="In 50% of the molecules." evidence="3">
    <original>W</original>
    <variation>R</variation>
    <location>
        <position position="257"/>
    </location>
</feature>
<gene>
    <name type="primary">Gfra4</name>
</gene>
<accession>Q9EPI2</accession>
<accession>Q9EPI3</accession>
<dbReference type="EMBL" id="AJ294475">
    <property type="protein sequence ID" value="CAC16420.1"/>
    <property type="molecule type" value="mRNA"/>
</dbReference>
<dbReference type="EMBL" id="AJ294476">
    <property type="protein sequence ID" value="CAC16421.1"/>
    <property type="molecule type" value="mRNA"/>
</dbReference>
<dbReference type="RefSeq" id="NP_076457.1">
    <molecule id="Q9EPI2-2"/>
    <property type="nucleotide sequence ID" value="NM_023967.2"/>
</dbReference>
<dbReference type="SMR" id="Q9EPI2"/>
<dbReference type="FunCoup" id="Q9EPI2">
    <property type="interactions" value="5"/>
</dbReference>
<dbReference type="STRING" id="10116.ENSRNOP00000042875"/>
<dbReference type="GlyCosmos" id="Q9EPI2">
    <property type="glycosylation" value="1 site, No reported glycans"/>
</dbReference>
<dbReference type="GlyGen" id="Q9EPI2">
    <property type="glycosylation" value="1 site"/>
</dbReference>
<dbReference type="PaxDb" id="10116-ENSRNOP00000042875"/>
<dbReference type="Ensembl" id="ENSRNOT00000047947.3">
    <molecule id="Q9EPI2-2"/>
    <property type="protein sequence ID" value="ENSRNOP00000042875.2"/>
    <property type="gene ID" value="ENSRNOG00000021241.7"/>
</dbReference>
<dbReference type="GeneID" id="66023"/>
<dbReference type="KEGG" id="rno:66023"/>
<dbReference type="UCSC" id="RGD:620503">
    <molecule id="Q9EPI2-1"/>
    <property type="organism name" value="rat"/>
</dbReference>
<dbReference type="AGR" id="RGD:620503"/>
<dbReference type="CTD" id="64096"/>
<dbReference type="RGD" id="620503">
    <property type="gene designation" value="Gfra4"/>
</dbReference>
<dbReference type="VEuPathDB" id="HostDB:ENSRNOG00000021241"/>
<dbReference type="eggNOG" id="ENOG502QSGA">
    <property type="taxonomic scope" value="Eukaryota"/>
</dbReference>
<dbReference type="GeneTree" id="ENSGT00940000160491"/>
<dbReference type="HOGENOM" id="CLU_040179_2_0_1"/>
<dbReference type="InParanoid" id="Q9EPI2"/>
<dbReference type="Reactome" id="R-RNO-5673001">
    <property type="pathway name" value="RAF/MAP kinase cascade"/>
</dbReference>
<dbReference type="Reactome" id="R-RNO-8853659">
    <property type="pathway name" value="RET signaling"/>
</dbReference>
<dbReference type="PRO" id="PR:Q9EPI2"/>
<dbReference type="Proteomes" id="UP000002494">
    <property type="component" value="Chromosome 3"/>
</dbReference>
<dbReference type="Bgee" id="ENSRNOG00000021241">
    <property type="expression patterns" value="Expressed in ovary and 15 other cell types or tissues"/>
</dbReference>
<dbReference type="GO" id="GO:0009897">
    <property type="term" value="C:external side of plasma membrane"/>
    <property type="evidence" value="ECO:0000318"/>
    <property type="project" value="GO_Central"/>
</dbReference>
<dbReference type="GO" id="GO:0005615">
    <property type="term" value="C:extracellular space"/>
    <property type="evidence" value="ECO:0000314"/>
    <property type="project" value="RGD"/>
</dbReference>
<dbReference type="GO" id="GO:0005886">
    <property type="term" value="C:plasma membrane"/>
    <property type="evidence" value="ECO:0000266"/>
    <property type="project" value="RGD"/>
</dbReference>
<dbReference type="GO" id="GO:0043235">
    <property type="term" value="C:receptor complex"/>
    <property type="evidence" value="ECO:0000318"/>
    <property type="project" value="GO_Central"/>
</dbReference>
<dbReference type="GO" id="GO:0016167">
    <property type="term" value="F:glial cell-derived neurotrophic factor receptor activity"/>
    <property type="evidence" value="ECO:0000314"/>
    <property type="project" value="RGD"/>
</dbReference>
<dbReference type="GO" id="GO:0035860">
    <property type="term" value="P:glial cell-derived neurotrophic factor receptor signaling pathway"/>
    <property type="evidence" value="ECO:0000266"/>
    <property type="project" value="RGD"/>
</dbReference>
<dbReference type="GO" id="GO:0030279">
    <property type="term" value="P:negative regulation of ossification"/>
    <property type="evidence" value="ECO:0000266"/>
    <property type="project" value="RGD"/>
</dbReference>
<dbReference type="GO" id="GO:0007399">
    <property type="term" value="P:nervous system development"/>
    <property type="evidence" value="ECO:0000318"/>
    <property type="project" value="GO_Central"/>
</dbReference>
<dbReference type="GO" id="GO:0001503">
    <property type="term" value="P:ossification"/>
    <property type="evidence" value="ECO:0000266"/>
    <property type="project" value="RGD"/>
</dbReference>
<dbReference type="FunFam" id="1.10.220.110:FF:000001">
    <property type="entry name" value="GDNF family receptor alpha"/>
    <property type="match status" value="1"/>
</dbReference>
<dbReference type="Gene3D" id="1.10.220.110">
    <property type="entry name" value="GDNF binding domain"/>
    <property type="match status" value="1"/>
</dbReference>
<dbReference type="InterPro" id="IPR016017">
    <property type="entry name" value="GDNF/GAS1"/>
</dbReference>
<dbReference type="InterPro" id="IPR037193">
    <property type="entry name" value="GDNF_alpha"/>
</dbReference>
<dbReference type="InterPro" id="IPR003438">
    <property type="entry name" value="GDNF_rcpt"/>
</dbReference>
<dbReference type="PANTHER" id="PTHR10269:SF2">
    <property type="entry name" value="GDNF FAMILY RECEPTOR ALPHA-4"/>
    <property type="match status" value="1"/>
</dbReference>
<dbReference type="PANTHER" id="PTHR10269">
    <property type="entry name" value="GDNF RECEPTOR ALPHA"/>
    <property type="match status" value="1"/>
</dbReference>
<dbReference type="Pfam" id="PF02351">
    <property type="entry name" value="GDNF"/>
    <property type="match status" value="2"/>
</dbReference>
<dbReference type="PRINTS" id="PR01316">
    <property type="entry name" value="GDNFRECEPTOR"/>
</dbReference>
<dbReference type="SMART" id="SM00907">
    <property type="entry name" value="GDNF"/>
    <property type="match status" value="2"/>
</dbReference>
<dbReference type="SUPFAM" id="SSF110035">
    <property type="entry name" value="GDNF receptor-like"/>
    <property type="match status" value="1"/>
</dbReference>
<sequence>MLSGAYLRVLNERPGQAVLWSLGCQRGSASSTEGNRCVEAAEACTADEQCQQLRSEYVAQCLGRAGWRGPGSCVRSRCRRALRRFFARGPPALTHALLFCGCEGPACAERRRQTFAPACAFSGPQLAPPSCLKPLDRCERSRRCRPRLFAFQASCAPAPGSRDGCPEEGGPRCLRAYAGLVGTVVTPNYLDNVSARVAPWCGCEASGNRREECEAFRKLFTRNPCLDGAIQAFDSSQPSVLQDQWNPYQNAGCCFLWVSSMSILTALALQALL</sequence>
<comment type="function">
    <text evidence="1 3">Receptor for persephin (PSPN), a growth factor that exhibits neurotrophic activity on mesencephalic dopaminergic and motor neurons (PubMed:10958791). Acts by binding to its coreceptor, GFRA4, leading to autophosphorylation and activation of the RET receptor (By similarity). May be important in C-cell development and, in the postnatal development of the adrenal medulla (By similarity).</text>
</comment>
<comment type="subunit">
    <text evidence="1">Interacts with ARTN ligand and RET: forms a 2:2:2 ternary complex composed of ARTN ligand, GFRA3 and RET receptor. Interacts with SORL1.</text>
</comment>
<comment type="subcellular location">
    <molecule>Isoform A</molecule>
    <subcellularLocation>
        <location evidence="3">Cell membrane</location>
        <topology evidence="1">Lipid-anchor</topology>
        <topology evidence="1">GPI-anchor</topology>
    </subcellularLocation>
</comment>
<comment type="subcellular location">
    <molecule>Isoform B</molecule>
    <subcellularLocation>
        <location evidence="6">Secreted</location>
    </subcellularLocation>
</comment>
<comment type="alternative products">
    <event type="alternative splicing"/>
    <isoform>
        <id>Q9EPI2-1</id>
        <name>A</name>
        <sequence type="displayed"/>
    </isoform>
    <isoform>
        <id>Q9EPI2-2</id>
        <name>B</name>
        <sequence type="described" ref="VSP_007230"/>
    </isoform>
    <text>Additional isoforms seem to exist.</text>
</comment>
<comment type="tissue specificity">
    <text>Weakly expressed in heart, brain and testis.</text>
</comment>
<comment type="miscellaneous">
    <molecule>Isoform A</molecule>
    <text evidence="3">GPI-anchored form.</text>
</comment>
<comment type="similarity">
    <text evidence="5">Belongs to the GDNFR family.</text>
</comment>
<evidence type="ECO:0000250" key="1">
    <source>
        <dbReference type="UniProtKB" id="Q9GZZ7"/>
    </source>
</evidence>
<evidence type="ECO:0000255" key="2"/>
<evidence type="ECO:0000269" key="3">
    <source>
    </source>
</evidence>
<evidence type="ECO:0000303" key="4">
    <source>
    </source>
</evidence>
<evidence type="ECO:0000305" key="5"/>
<evidence type="ECO:0000305" key="6">
    <source>
    </source>
</evidence>